<feature type="chain" id="PRO_1000143472" description="ATP synthase subunit beta">
    <location>
        <begin position="1"/>
        <end position="500"/>
    </location>
</feature>
<feature type="binding site" evidence="1">
    <location>
        <begin position="155"/>
        <end position="162"/>
    </location>
    <ligand>
        <name>ATP</name>
        <dbReference type="ChEBI" id="CHEBI:30616"/>
    </ligand>
</feature>
<gene>
    <name evidence="1" type="primary">atpD</name>
    <name type="ordered locus">CFPG_134</name>
</gene>
<keyword id="KW-0066">ATP synthesis</keyword>
<keyword id="KW-0067">ATP-binding</keyword>
<keyword id="KW-0997">Cell inner membrane</keyword>
<keyword id="KW-1003">Cell membrane</keyword>
<keyword id="KW-0139">CF(1)</keyword>
<keyword id="KW-0375">Hydrogen ion transport</keyword>
<keyword id="KW-0406">Ion transport</keyword>
<keyword id="KW-0472">Membrane</keyword>
<keyword id="KW-0547">Nucleotide-binding</keyword>
<keyword id="KW-1185">Reference proteome</keyword>
<keyword id="KW-1278">Translocase</keyword>
<keyword id="KW-0813">Transport</keyword>
<name>ATPB_AZOPC</name>
<protein>
    <recommendedName>
        <fullName evidence="1">ATP synthase subunit beta</fullName>
        <ecNumber evidence="1">7.1.2.2</ecNumber>
    </recommendedName>
    <alternativeName>
        <fullName evidence="1">ATP synthase F1 sector subunit beta</fullName>
    </alternativeName>
    <alternativeName>
        <fullName evidence="1">F-ATPase subunit beta</fullName>
    </alternativeName>
</protein>
<proteinExistence type="inferred from homology"/>
<organism>
    <name type="scientific">Azobacteroides pseudotrichonymphae genomovar. CFP2</name>
    <dbReference type="NCBI Taxonomy" id="511995"/>
    <lineage>
        <taxon>Bacteria</taxon>
        <taxon>Pseudomonadati</taxon>
        <taxon>Bacteroidota</taxon>
        <taxon>Bacteroidia</taxon>
        <taxon>Bacteroidales</taxon>
        <taxon>Candidatus Azobacteroides</taxon>
    </lineage>
</organism>
<comment type="function">
    <text evidence="1">Produces ATP from ADP in the presence of a proton gradient across the membrane. The catalytic sites are hosted primarily by the beta subunits.</text>
</comment>
<comment type="catalytic activity">
    <reaction evidence="1">
        <text>ATP + H2O + 4 H(+)(in) = ADP + phosphate + 5 H(+)(out)</text>
        <dbReference type="Rhea" id="RHEA:57720"/>
        <dbReference type="ChEBI" id="CHEBI:15377"/>
        <dbReference type="ChEBI" id="CHEBI:15378"/>
        <dbReference type="ChEBI" id="CHEBI:30616"/>
        <dbReference type="ChEBI" id="CHEBI:43474"/>
        <dbReference type="ChEBI" id="CHEBI:456216"/>
        <dbReference type="EC" id="7.1.2.2"/>
    </reaction>
</comment>
<comment type="subunit">
    <text evidence="1">F-type ATPases have 2 components, CF(1) - the catalytic core - and CF(0) - the membrane proton channel. CF(1) has five subunits: alpha(3), beta(3), gamma(1), delta(1), epsilon(1). CF(0) has three main subunits: a(1), b(2) and c(9-12). The alpha and beta chains form an alternating ring which encloses part of the gamma chain. CF(1) is attached to CF(0) by a central stalk formed by the gamma and epsilon chains, while a peripheral stalk is formed by the delta and b chains.</text>
</comment>
<comment type="subcellular location">
    <subcellularLocation>
        <location evidence="1">Cell inner membrane</location>
        <topology evidence="1">Peripheral membrane protein</topology>
    </subcellularLocation>
</comment>
<comment type="similarity">
    <text evidence="1">Belongs to the ATPase alpha/beta chains family.</text>
</comment>
<evidence type="ECO:0000255" key="1">
    <source>
        <dbReference type="HAMAP-Rule" id="MF_01347"/>
    </source>
</evidence>
<sequence length="500" mass="54796">MPENFGYISQVIGSVVDVSYRYTSGGLPKINDALQITHSNGKVLIVEVQQHIGEDTVRAVAMDSTDGISRGMKAVNLGRPISMPIGNQVKGRLLNVIGETIDGMKCLSYENTKSIHCDPPKFKDLSTSVEVLFTGIKVIDLLAPYLKGGKIGLFGGAGVGKTVLIMELINNIAKKHNGFSVFAGVGERTREGNDLLREMIESGVIRYGKEFEEGMRLGEWDLSKIDYEELKKSQATLVFGQMNEPPGARSSVVLSGLTIAEAFRDQSGSDGHDVLFFIDNIFRFTQAGSEVSALLGRMPSAVGYQPTLATEMGKMQERITSTKNGSITSIQAVYVPADDLTDPAPATTFTFLDATTVLDRKIFELGIYPAVDPLNSVSRILDPNVLGQEHYDTAQKVKQLLQRYKELQDIIAILGMEELSEEDKLVVNRARRVQRFLSQPFFMAEAFSGIPGVMVSREDTIKGFNMLMNGDVDYLPEQAFLNVGTIEDAIEKGKKLTALT</sequence>
<accession>B6YQC5</accession>
<dbReference type="EC" id="7.1.2.2" evidence="1"/>
<dbReference type="EMBL" id="AP010656">
    <property type="protein sequence ID" value="BAG83397.1"/>
    <property type="molecule type" value="Genomic_DNA"/>
</dbReference>
<dbReference type="RefSeq" id="WP_012573158.1">
    <property type="nucleotide sequence ID" value="NC_011565.1"/>
</dbReference>
<dbReference type="SMR" id="B6YQC5"/>
<dbReference type="STRING" id="511995.CFPG_134"/>
<dbReference type="KEGG" id="aps:CFPG_134"/>
<dbReference type="eggNOG" id="COG0055">
    <property type="taxonomic scope" value="Bacteria"/>
</dbReference>
<dbReference type="HOGENOM" id="CLU_022398_0_2_10"/>
<dbReference type="OrthoDB" id="9801639at2"/>
<dbReference type="Proteomes" id="UP000000723">
    <property type="component" value="Chromosome"/>
</dbReference>
<dbReference type="GO" id="GO:0005886">
    <property type="term" value="C:plasma membrane"/>
    <property type="evidence" value="ECO:0007669"/>
    <property type="project" value="UniProtKB-SubCell"/>
</dbReference>
<dbReference type="GO" id="GO:0045259">
    <property type="term" value="C:proton-transporting ATP synthase complex"/>
    <property type="evidence" value="ECO:0007669"/>
    <property type="project" value="UniProtKB-KW"/>
</dbReference>
<dbReference type="GO" id="GO:0005524">
    <property type="term" value="F:ATP binding"/>
    <property type="evidence" value="ECO:0007669"/>
    <property type="project" value="UniProtKB-UniRule"/>
</dbReference>
<dbReference type="GO" id="GO:0016887">
    <property type="term" value="F:ATP hydrolysis activity"/>
    <property type="evidence" value="ECO:0007669"/>
    <property type="project" value="InterPro"/>
</dbReference>
<dbReference type="GO" id="GO:0046933">
    <property type="term" value="F:proton-transporting ATP synthase activity, rotational mechanism"/>
    <property type="evidence" value="ECO:0007669"/>
    <property type="project" value="UniProtKB-UniRule"/>
</dbReference>
<dbReference type="CDD" id="cd18110">
    <property type="entry name" value="ATP-synt_F1_beta_C"/>
    <property type="match status" value="1"/>
</dbReference>
<dbReference type="CDD" id="cd18115">
    <property type="entry name" value="ATP-synt_F1_beta_N"/>
    <property type="match status" value="1"/>
</dbReference>
<dbReference type="CDD" id="cd01133">
    <property type="entry name" value="F1-ATPase_beta_CD"/>
    <property type="match status" value="1"/>
</dbReference>
<dbReference type="FunFam" id="1.10.1140.10:FF:000001">
    <property type="entry name" value="ATP synthase subunit beta"/>
    <property type="match status" value="1"/>
</dbReference>
<dbReference type="FunFam" id="3.40.50.300:FF:000004">
    <property type="entry name" value="ATP synthase subunit beta"/>
    <property type="match status" value="1"/>
</dbReference>
<dbReference type="Gene3D" id="2.40.10.170">
    <property type="match status" value="1"/>
</dbReference>
<dbReference type="Gene3D" id="1.10.1140.10">
    <property type="entry name" value="Bovine Mitochondrial F1-atpase, Atp Synthase Beta Chain, Chain D, domain 3"/>
    <property type="match status" value="1"/>
</dbReference>
<dbReference type="Gene3D" id="3.40.50.300">
    <property type="entry name" value="P-loop containing nucleotide triphosphate hydrolases"/>
    <property type="match status" value="1"/>
</dbReference>
<dbReference type="HAMAP" id="MF_01347">
    <property type="entry name" value="ATP_synth_beta_bact"/>
    <property type="match status" value="1"/>
</dbReference>
<dbReference type="InterPro" id="IPR003593">
    <property type="entry name" value="AAA+_ATPase"/>
</dbReference>
<dbReference type="InterPro" id="IPR055190">
    <property type="entry name" value="ATP-synt_VA_C"/>
</dbReference>
<dbReference type="InterPro" id="IPR005722">
    <property type="entry name" value="ATP_synth_F1_bsu"/>
</dbReference>
<dbReference type="InterPro" id="IPR020003">
    <property type="entry name" value="ATPase_a/bsu_AS"/>
</dbReference>
<dbReference type="InterPro" id="IPR050053">
    <property type="entry name" value="ATPase_alpha/beta_chains"/>
</dbReference>
<dbReference type="InterPro" id="IPR004100">
    <property type="entry name" value="ATPase_F1/V1/A1_a/bsu_N"/>
</dbReference>
<dbReference type="InterPro" id="IPR036121">
    <property type="entry name" value="ATPase_F1/V1/A1_a/bsu_N_sf"/>
</dbReference>
<dbReference type="InterPro" id="IPR000194">
    <property type="entry name" value="ATPase_F1/V1/A1_a/bsu_nucl-bd"/>
</dbReference>
<dbReference type="InterPro" id="IPR024034">
    <property type="entry name" value="ATPase_F1/V1_b/a_C"/>
</dbReference>
<dbReference type="InterPro" id="IPR027417">
    <property type="entry name" value="P-loop_NTPase"/>
</dbReference>
<dbReference type="NCBIfam" id="TIGR01039">
    <property type="entry name" value="atpD"/>
    <property type="match status" value="1"/>
</dbReference>
<dbReference type="PANTHER" id="PTHR15184">
    <property type="entry name" value="ATP SYNTHASE"/>
    <property type="match status" value="1"/>
</dbReference>
<dbReference type="PANTHER" id="PTHR15184:SF71">
    <property type="entry name" value="ATP SYNTHASE SUBUNIT BETA, MITOCHONDRIAL"/>
    <property type="match status" value="1"/>
</dbReference>
<dbReference type="Pfam" id="PF00006">
    <property type="entry name" value="ATP-synt_ab"/>
    <property type="match status" value="1"/>
</dbReference>
<dbReference type="Pfam" id="PF02874">
    <property type="entry name" value="ATP-synt_ab_N"/>
    <property type="match status" value="1"/>
</dbReference>
<dbReference type="Pfam" id="PF22919">
    <property type="entry name" value="ATP-synt_VA_C"/>
    <property type="match status" value="1"/>
</dbReference>
<dbReference type="SMART" id="SM00382">
    <property type="entry name" value="AAA"/>
    <property type="match status" value="1"/>
</dbReference>
<dbReference type="SUPFAM" id="SSF47917">
    <property type="entry name" value="C-terminal domain of alpha and beta subunits of F1 ATP synthase"/>
    <property type="match status" value="1"/>
</dbReference>
<dbReference type="SUPFAM" id="SSF50615">
    <property type="entry name" value="N-terminal domain of alpha and beta subunits of F1 ATP synthase"/>
    <property type="match status" value="1"/>
</dbReference>
<dbReference type="SUPFAM" id="SSF52540">
    <property type="entry name" value="P-loop containing nucleoside triphosphate hydrolases"/>
    <property type="match status" value="1"/>
</dbReference>
<dbReference type="PROSITE" id="PS00152">
    <property type="entry name" value="ATPASE_ALPHA_BETA"/>
    <property type="match status" value="1"/>
</dbReference>
<reference key="1">
    <citation type="journal article" date="2008" name="Science">
        <title>Genome of an endosymbiont coupling N2 fixation to cellulolysis within RT protist cells in termite gut.</title>
        <authorList>
            <person name="Hongoh Y."/>
            <person name="Sharma V.K."/>
            <person name="Prakash T."/>
            <person name="Noda S."/>
            <person name="Toh H."/>
            <person name="Taylor T.D."/>
            <person name="Kudo T."/>
            <person name="Sakaki Y."/>
            <person name="Toyoda A."/>
            <person name="Hattori M."/>
            <person name="Ohkuma M."/>
        </authorList>
    </citation>
    <scope>NUCLEOTIDE SEQUENCE [LARGE SCALE GENOMIC DNA]</scope>
</reference>